<keyword id="KW-0028">Amino-acid biosynthesis</keyword>
<keyword id="KW-0963">Cytoplasm</keyword>
<keyword id="KW-0220">Diaminopimelate biosynthesis</keyword>
<keyword id="KW-0457">Lysine biosynthesis</keyword>
<keyword id="KW-0520">NAD</keyword>
<keyword id="KW-0521">NADP</keyword>
<keyword id="KW-0560">Oxidoreductase</keyword>
<keyword id="KW-1185">Reference proteome</keyword>
<organism>
    <name type="scientific">Nostoc punctiforme (strain ATCC 29133 / PCC 73102)</name>
    <dbReference type="NCBI Taxonomy" id="63737"/>
    <lineage>
        <taxon>Bacteria</taxon>
        <taxon>Bacillati</taxon>
        <taxon>Cyanobacteriota</taxon>
        <taxon>Cyanophyceae</taxon>
        <taxon>Nostocales</taxon>
        <taxon>Nostocaceae</taxon>
        <taxon>Nostoc</taxon>
    </lineage>
</organism>
<reference key="1">
    <citation type="journal article" date="2013" name="Plant Physiol.">
        <title>A Nostoc punctiforme Sugar Transporter Necessary to Establish a Cyanobacterium-Plant Symbiosis.</title>
        <authorList>
            <person name="Ekman M."/>
            <person name="Picossi S."/>
            <person name="Campbell E.L."/>
            <person name="Meeks J.C."/>
            <person name="Flores E."/>
        </authorList>
    </citation>
    <scope>NUCLEOTIDE SEQUENCE [LARGE SCALE GENOMIC DNA]</scope>
    <source>
        <strain>ATCC 29133 / PCC 73102</strain>
    </source>
</reference>
<protein>
    <recommendedName>
        <fullName evidence="1">4-hydroxy-tetrahydrodipicolinate reductase</fullName>
        <shortName evidence="1">HTPA reductase</shortName>
        <ecNumber evidence="1">1.17.1.8</ecNumber>
    </recommendedName>
</protein>
<gene>
    <name evidence="1" type="primary">dapB</name>
    <name type="ordered locus">Npun_F4916</name>
</gene>
<feature type="chain" id="PRO_1000093983" description="4-hydroxy-tetrahydrodipicolinate reductase">
    <location>
        <begin position="1"/>
        <end position="278"/>
    </location>
</feature>
<feature type="active site" description="Proton donor/acceptor" evidence="1">
    <location>
        <position position="167"/>
    </location>
</feature>
<feature type="active site" description="Proton donor" evidence="1">
    <location>
        <position position="171"/>
    </location>
</feature>
<feature type="binding site" evidence="1">
    <location>
        <begin position="13"/>
        <end position="18"/>
    </location>
    <ligand>
        <name>NAD(+)</name>
        <dbReference type="ChEBI" id="CHEBI:57540"/>
    </ligand>
</feature>
<feature type="binding site" evidence="1">
    <location>
        <begin position="111"/>
        <end position="113"/>
    </location>
    <ligand>
        <name>NAD(+)</name>
        <dbReference type="ChEBI" id="CHEBI:57540"/>
    </ligand>
</feature>
<feature type="binding site" evidence="1">
    <location>
        <position position="168"/>
    </location>
    <ligand>
        <name>(S)-2,3,4,5-tetrahydrodipicolinate</name>
        <dbReference type="ChEBI" id="CHEBI:16845"/>
    </ligand>
</feature>
<feature type="binding site" evidence="1">
    <location>
        <begin position="177"/>
        <end position="178"/>
    </location>
    <ligand>
        <name>(S)-2,3,4,5-tetrahydrodipicolinate</name>
        <dbReference type="ChEBI" id="CHEBI:16845"/>
    </ligand>
</feature>
<accession>B2J0A9</accession>
<evidence type="ECO:0000255" key="1">
    <source>
        <dbReference type="HAMAP-Rule" id="MF_00102"/>
    </source>
</evidence>
<evidence type="ECO:0000305" key="2"/>
<proteinExistence type="inferred from homology"/>
<dbReference type="EC" id="1.17.1.8" evidence="1"/>
<dbReference type="EMBL" id="CP001037">
    <property type="protein sequence ID" value="ACC83261.1"/>
    <property type="molecule type" value="Genomic_DNA"/>
</dbReference>
<dbReference type="RefSeq" id="WP_012411217.1">
    <property type="nucleotide sequence ID" value="NC_010628.1"/>
</dbReference>
<dbReference type="SMR" id="B2J0A9"/>
<dbReference type="STRING" id="63737.Npun_F4916"/>
<dbReference type="EnsemblBacteria" id="ACC83261">
    <property type="protein sequence ID" value="ACC83261"/>
    <property type="gene ID" value="Npun_F4916"/>
</dbReference>
<dbReference type="KEGG" id="npu:Npun_F4916"/>
<dbReference type="eggNOG" id="COG0289">
    <property type="taxonomic scope" value="Bacteria"/>
</dbReference>
<dbReference type="HOGENOM" id="CLU_047479_0_1_3"/>
<dbReference type="OrthoDB" id="9790352at2"/>
<dbReference type="PhylomeDB" id="B2J0A9"/>
<dbReference type="UniPathway" id="UPA00034">
    <property type="reaction ID" value="UER00018"/>
</dbReference>
<dbReference type="Proteomes" id="UP000001191">
    <property type="component" value="Chromosome"/>
</dbReference>
<dbReference type="GO" id="GO:0005829">
    <property type="term" value="C:cytosol"/>
    <property type="evidence" value="ECO:0007669"/>
    <property type="project" value="TreeGrafter"/>
</dbReference>
<dbReference type="GO" id="GO:0008839">
    <property type="term" value="F:4-hydroxy-tetrahydrodipicolinate reductase"/>
    <property type="evidence" value="ECO:0007669"/>
    <property type="project" value="UniProtKB-EC"/>
</dbReference>
<dbReference type="GO" id="GO:0051287">
    <property type="term" value="F:NAD binding"/>
    <property type="evidence" value="ECO:0007669"/>
    <property type="project" value="UniProtKB-UniRule"/>
</dbReference>
<dbReference type="GO" id="GO:0050661">
    <property type="term" value="F:NADP binding"/>
    <property type="evidence" value="ECO:0007669"/>
    <property type="project" value="UniProtKB-UniRule"/>
</dbReference>
<dbReference type="GO" id="GO:0016726">
    <property type="term" value="F:oxidoreductase activity, acting on CH or CH2 groups, NAD or NADP as acceptor"/>
    <property type="evidence" value="ECO:0007669"/>
    <property type="project" value="UniProtKB-UniRule"/>
</dbReference>
<dbReference type="GO" id="GO:0019877">
    <property type="term" value="P:diaminopimelate biosynthetic process"/>
    <property type="evidence" value="ECO:0007669"/>
    <property type="project" value="UniProtKB-UniRule"/>
</dbReference>
<dbReference type="GO" id="GO:0009089">
    <property type="term" value="P:lysine biosynthetic process via diaminopimelate"/>
    <property type="evidence" value="ECO:0007669"/>
    <property type="project" value="UniProtKB-UniRule"/>
</dbReference>
<dbReference type="CDD" id="cd02274">
    <property type="entry name" value="DHDPR_N"/>
    <property type="match status" value="1"/>
</dbReference>
<dbReference type="FunFam" id="3.30.360.10:FF:000009">
    <property type="entry name" value="4-hydroxy-tetrahydrodipicolinate reductase"/>
    <property type="match status" value="1"/>
</dbReference>
<dbReference type="Gene3D" id="3.30.360.10">
    <property type="entry name" value="Dihydrodipicolinate Reductase, domain 2"/>
    <property type="match status" value="1"/>
</dbReference>
<dbReference type="Gene3D" id="3.40.50.720">
    <property type="entry name" value="NAD(P)-binding Rossmann-like Domain"/>
    <property type="match status" value="1"/>
</dbReference>
<dbReference type="HAMAP" id="MF_00102">
    <property type="entry name" value="DapB"/>
    <property type="match status" value="1"/>
</dbReference>
<dbReference type="InterPro" id="IPR022663">
    <property type="entry name" value="DapB_C"/>
</dbReference>
<dbReference type="InterPro" id="IPR000846">
    <property type="entry name" value="DapB_N"/>
</dbReference>
<dbReference type="InterPro" id="IPR022664">
    <property type="entry name" value="DapB_N_CS"/>
</dbReference>
<dbReference type="InterPro" id="IPR023940">
    <property type="entry name" value="DHDPR_bac"/>
</dbReference>
<dbReference type="InterPro" id="IPR036291">
    <property type="entry name" value="NAD(P)-bd_dom_sf"/>
</dbReference>
<dbReference type="NCBIfam" id="TIGR00036">
    <property type="entry name" value="dapB"/>
    <property type="match status" value="1"/>
</dbReference>
<dbReference type="PANTHER" id="PTHR20836:SF0">
    <property type="entry name" value="4-HYDROXY-TETRAHYDRODIPICOLINATE REDUCTASE 1, CHLOROPLASTIC-RELATED"/>
    <property type="match status" value="1"/>
</dbReference>
<dbReference type="PANTHER" id="PTHR20836">
    <property type="entry name" value="DIHYDRODIPICOLINATE REDUCTASE"/>
    <property type="match status" value="1"/>
</dbReference>
<dbReference type="Pfam" id="PF05173">
    <property type="entry name" value="DapB_C"/>
    <property type="match status" value="1"/>
</dbReference>
<dbReference type="Pfam" id="PF01113">
    <property type="entry name" value="DapB_N"/>
    <property type="match status" value="1"/>
</dbReference>
<dbReference type="PIRSF" id="PIRSF000161">
    <property type="entry name" value="DHPR"/>
    <property type="match status" value="1"/>
</dbReference>
<dbReference type="SUPFAM" id="SSF55347">
    <property type="entry name" value="Glyceraldehyde-3-phosphate dehydrogenase-like, C-terminal domain"/>
    <property type="match status" value="1"/>
</dbReference>
<dbReference type="SUPFAM" id="SSF51735">
    <property type="entry name" value="NAD(P)-binding Rossmann-fold domains"/>
    <property type="match status" value="1"/>
</dbReference>
<dbReference type="PROSITE" id="PS01298">
    <property type="entry name" value="DAPB"/>
    <property type="match status" value="1"/>
</dbReference>
<sequence length="278" mass="29603">MTNQAPIPVIVNGAAGKMGREVIKAVAQAPDLNLVGAIDHSLEHQDKDAGELAGLSEPLEVPITNQLEPMLGYVAGDRQSPPGVIVDFTHPDSVYDNIRSAIAYGIRPVVGTTGLSPEQIQDLADFADKASTGCLIIPNFSIGMVLLQQAAIAASKYFDHVEIIELHHNQKADAPSGTAIQTAQLLGELGKTFNPALVEETEKLPGARGSIADEGIRIHSVRLPGLIAHQEVIFGAAGQIYTLRHDTSDRACYMPGVLLAIRKVLALKSLVYGLEKIL</sequence>
<name>DAPB_NOSP7</name>
<comment type="function">
    <text evidence="1">Catalyzes the conversion of 4-hydroxy-tetrahydrodipicolinate (HTPA) to tetrahydrodipicolinate.</text>
</comment>
<comment type="catalytic activity">
    <reaction evidence="1">
        <text>(S)-2,3,4,5-tetrahydrodipicolinate + NAD(+) + H2O = (2S,4S)-4-hydroxy-2,3,4,5-tetrahydrodipicolinate + NADH + H(+)</text>
        <dbReference type="Rhea" id="RHEA:35323"/>
        <dbReference type="ChEBI" id="CHEBI:15377"/>
        <dbReference type="ChEBI" id="CHEBI:15378"/>
        <dbReference type="ChEBI" id="CHEBI:16845"/>
        <dbReference type="ChEBI" id="CHEBI:57540"/>
        <dbReference type="ChEBI" id="CHEBI:57945"/>
        <dbReference type="ChEBI" id="CHEBI:67139"/>
        <dbReference type="EC" id="1.17.1.8"/>
    </reaction>
</comment>
<comment type="catalytic activity">
    <reaction evidence="1">
        <text>(S)-2,3,4,5-tetrahydrodipicolinate + NADP(+) + H2O = (2S,4S)-4-hydroxy-2,3,4,5-tetrahydrodipicolinate + NADPH + H(+)</text>
        <dbReference type="Rhea" id="RHEA:35331"/>
        <dbReference type="ChEBI" id="CHEBI:15377"/>
        <dbReference type="ChEBI" id="CHEBI:15378"/>
        <dbReference type="ChEBI" id="CHEBI:16845"/>
        <dbReference type="ChEBI" id="CHEBI:57783"/>
        <dbReference type="ChEBI" id="CHEBI:58349"/>
        <dbReference type="ChEBI" id="CHEBI:67139"/>
        <dbReference type="EC" id="1.17.1.8"/>
    </reaction>
</comment>
<comment type="pathway">
    <text evidence="1">Amino-acid biosynthesis; L-lysine biosynthesis via DAP pathway; (S)-tetrahydrodipicolinate from L-aspartate: step 4/4.</text>
</comment>
<comment type="subcellular location">
    <subcellularLocation>
        <location evidence="1">Cytoplasm</location>
    </subcellularLocation>
</comment>
<comment type="similarity">
    <text evidence="1">Belongs to the DapB family.</text>
</comment>
<comment type="caution">
    <text evidence="2">Was originally thought to be a dihydrodipicolinate reductase (DHDPR), catalyzing the conversion of dihydrodipicolinate to tetrahydrodipicolinate. However, it was shown in E.coli that the substrate of the enzymatic reaction is not dihydrodipicolinate (DHDP) but in fact (2S,4S)-4-hydroxy-2,3,4,5-tetrahydrodipicolinic acid (HTPA), the product released by the DapA-catalyzed reaction.</text>
</comment>